<organism>
    <name type="scientific">Homo sapiens</name>
    <name type="common">Human</name>
    <dbReference type="NCBI Taxonomy" id="9606"/>
    <lineage>
        <taxon>Eukaryota</taxon>
        <taxon>Metazoa</taxon>
        <taxon>Chordata</taxon>
        <taxon>Craniata</taxon>
        <taxon>Vertebrata</taxon>
        <taxon>Euteleostomi</taxon>
        <taxon>Mammalia</taxon>
        <taxon>Eutheria</taxon>
        <taxon>Euarchontoglires</taxon>
        <taxon>Primates</taxon>
        <taxon>Haplorrhini</taxon>
        <taxon>Catarrhini</taxon>
        <taxon>Hominidae</taxon>
        <taxon>Homo</taxon>
    </lineage>
</organism>
<accession>A0A0B4J273</accession>
<keyword id="KW-1064">Adaptive immunity</keyword>
<keyword id="KW-1003">Cell membrane</keyword>
<keyword id="KW-1015">Disulfide bond</keyword>
<keyword id="KW-0325">Glycoprotein</keyword>
<keyword id="KW-0391">Immunity</keyword>
<keyword id="KW-0393">Immunoglobulin domain</keyword>
<keyword id="KW-0472">Membrane</keyword>
<keyword id="KW-0675">Receptor</keyword>
<keyword id="KW-1185">Reference proteome</keyword>
<keyword id="KW-0732">Signal</keyword>
<keyword id="KW-1279">T cell receptor</keyword>
<proteinExistence type="inferred from homology"/>
<comment type="function">
    <text evidence="3 5 6 7">V region of the variable domain of T cell receptor (TR) alpha chain that participates in the antigen recognition (PubMed:24600447). Alpha-beta T cell receptors are antigen specific receptors which are essential to the immune response and are present on the cell surface of T lymphocytes. Recognize peptide-major histocompatibility (MH) (pMH) complexes that are displayed by antigen presenting cells (APC), a prerequisite for efficient T cell adaptive immunity against pathogens (PubMed:25493333). Binding of alpha-beta TR to pMH complex initiates TR-CD3 clustering on the cell surface and intracellular activation of LCK that phosphorylates the ITAM motifs of CD3G, CD3D, CD3E and CD247 enabling the recruitment of ZAP70. In turn ZAP70 phosphorylates LAT, which recruits numerous signaling molecules to form the LAT signalosome. The LAT signalosome propagates signal branching to three major signaling pathways, the calcium, the mitogen-activated protein kinase (MAPK) kinase and the nuclear factor NF-kappa-B (NF-kB) pathways, leading to the mobilization of transcription factors that are critical for gene expression and essential for T cell growth and differentiation (PubMed:23524462). The T cell repertoire is generated in the thymus, by V-(D)-J rearrangement. This repertoire is then shaped by intrathymic selection events to generate a peripheral T cell pool of self-MH restricted, non-autoaggressive T cells. Post-thymic interaction of alpha-beta TR with the pMH complexes shapes TR structural and functional avidity (PubMed:15040585).</text>
</comment>
<comment type="subunit">
    <text evidence="4">Alpha-beta TR is a heterodimer composed of an alpha and beta chain; disulfide-linked. The alpha-beta TR is associated with the transmembrane signaling CD3 coreceptor proteins to form the TR-CD3 (TcR or TCR). The assembly of alpha-beta TR heterodimers with CD3 occurs in the endoplasmic reticulum where a single alpha-beta TR heterodimer associates with one CD3D-CD3E heterodimer, one CD3G-CD3E heterodimer and one CD247 homodimer forming a stable octameric structure. CD3D-CD3E and CD3G-CD3E heterodimers preferentially associate with TR alpha and TR beta chains, respectively. The association of the CD247 homodimer is the last step of TcR assembly in the endoplasmic reticulum and is required for transport to the cell surface.</text>
</comment>
<comment type="subcellular location">
    <subcellularLocation>
        <location evidence="4">Cell membrane</location>
    </subcellularLocation>
</comment>
<comment type="polymorphism">
    <text evidence="9">There are several alleles. The sequence shown is that of IMGT allele TRAV34*01.</text>
</comment>
<feature type="signal peptide" evidence="1">
    <location>
        <begin position="1"/>
        <end position="21"/>
    </location>
</feature>
<feature type="chain" id="PRO_5002094091" description="T cell receptor alpha variable 34" evidence="1">
    <location>
        <begin position="22"/>
        <end position="112"/>
    </location>
</feature>
<feature type="domain" description="Ig-like" evidence="2">
    <location>
        <begin position="22"/>
        <end position="112" status="greater than"/>
    </location>
</feature>
<feature type="glycosylation site" description="N-linked (GlcNAc...) asparagine" evidence="1">
    <location>
        <position position="38"/>
    </location>
</feature>
<feature type="glycosylation site" description="N-linked (GlcNAc...) asparagine" evidence="1">
    <location>
        <position position="42"/>
    </location>
</feature>
<feature type="disulfide bond" evidence="2">
    <location>
        <begin position="43"/>
        <end position="109"/>
    </location>
</feature>
<feature type="non-terminal residue">
    <location>
        <position position="112"/>
    </location>
</feature>
<gene>
    <name evidence="8" type="primary">TRAV34</name>
</gene>
<sequence>METVLQVLLGILGFQAAWVSSQELEQSPQSLIVQEGKNLTINCTSSKTLYGLYWYKQKYGEGLIFLMMLQKGGEEKSHEKITAKLDEKKQQSSLHITASQPSHAGIYLCGAD</sequence>
<protein>
    <recommendedName>
        <fullName evidence="8">T cell receptor alpha variable 34</fullName>
    </recommendedName>
</protein>
<dbReference type="EMBL" id="AC245470">
    <property type="status" value="NOT_ANNOTATED_CDS"/>
    <property type="molecule type" value="Genomic_DNA"/>
</dbReference>
<dbReference type="SMR" id="A0A0B4J273"/>
<dbReference type="FunCoup" id="A0A0B4J273">
    <property type="interactions" value="318"/>
</dbReference>
<dbReference type="IMGT_GENE-DB" id="TRAV34"/>
<dbReference type="GlyCosmos" id="A0A0B4J273">
    <property type="glycosylation" value="2 sites, No reported glycans"/>
</dbReference>
<dbReference type="GlyGen" id="A0A0B4J273">
    <property type="glycosylation" value="2 sites"/>
</dbReference>
<dbReference type="BioMuta" id="TRAV34"/>
<dbReference type="Ensembl" id="ENST00000390461.2">
    <property type="protein sequence ID" value="ENSP00000452002.1"/>
    <property type="gene ID" value="ENSG00000211813.2"/>
</dbReference>
<dbReference type="AGR" id="HGNC:12133"/>
<dbReference type="GeneCards" id="TRAV34"/>
<dbReference type="HGNC" id="HGNC:12133">
    <property type="gene designation" value="TRAV34"/>
</dbReference>
<dbReference type="HPA" id="ENSG00000211813">
    <property type="expression patterns" value="Tissue enriched (lymphoid)"/>
</dbReference>
<dbReference type="neXtProt" id="NX_A0A0B4J273"/>
<dbReference type="VEuPathDB" id="HostDB:ENSG00000211813"/>
<dbReference type="GeneTree" id="ENSGT00940000162840"/>
<dbReference type="HOGENOM" id="CLU_077975_8_3_1"/>
<dbReference type="InParanoid" id="A0A0B4J273"/>
<dbReference type="OMA" id="NLTINCR"/>
<dbReference type="OrthoDB" id="9803478at2759"/>
<dbReference type="PAN-GO" id="A0A0B4J273">
    <property type="GO annotations" value="1 GO annotation based on evolutionary models"/>
</dbReference>
<dbReference type="PhylomeDB" id="A0A0B4J273"/>
<dbReference type="ChiTaRS" id="TRAV34">
    <property type="organism name" value="human"/>
</dbReference>
<dbReference type="Pharos" id="A0A0B4J273">
    <property type="development level" value="Tdark"/>
</dbReference>
<dbReference type="PRO" id="PR:A0A0B4J273"/>
<dbReference type="Proteomes" id="UP000005640">
    <property type="component" value="Chromosome 14"/>
</dbReference>
<dbReference type="RNAct" id="A0A0B4J273">
    <property type="molecule type" value="protein"/>
</dbReference>
<dbReference type="Bgee" id="ENSG00000211813">
    <property type="expression patterns" value="Expressed in primordial germ cell in gonad and 60 other cell types or tissues"/>
</dbReference>
<dbReference type="GO" id="GO:0042101">
    <property type="term" value="C:T cell receptor complex"/>
    <property type="evidence" value="ECO:0007669"/>
    <property type="project" value="UniProtKB-KW"/>
</dbReference>
<dbReference type="GO" id="GO:0002250">
    <property type="term" value="P:adaptive immune response"/>
    <property type="evidence" value="ECO:0007669"/>
    <property type="project" value="UniProtKB-KW"/>
</dbReference>
<dbReference type="GO" id="GO:0009617">
    <property type="term" value="P:response to bacterium"/>
    <property type="evidence" value="ECO:0000318"/>
    <property type="project" value="GO_Central"/>
</dbReference>
<dbReference type="Gene3D" id="2.60.40.10">
    <property type="entry name" value="Immunoglobulins"/>
    <property type="match status" value="1"/>
</dbReference>
<dbReference type="InterPro" id="IPR007110">
    <property type="entry name" value="Ig-like_dom"/>
</dbReference>
<dbReference type="InterPro" id="IPR036179">
    <property type="entry name" value="Ig-like_dom_sf"/>
</dbReference>
<dbReference type="InterPro" id="IPR013783">
    <property type="entry name" value="Ig-like_fold"/>
</dbReference>
<dbReference type="InterPro" id="IPR013106">
    <property type="entry name" value="Ig_V-set"/>
</dbReference>
<dbReference type="InterPro" id="IPR051896">
    <property type="entry name" value="TCR_alpha_variable"/>
</dbReference>
<dbReference type="PANTHER" id="PTHR19339:SF12">
    <property type="entry name" value="IG-LIKE DOMAIN-CONTAINING PROTEIN"/>
    <property type="match status" value="1"/>
</dbReference>
<dbReference type="PANTHER" id="PTHR19339">
    <property type="entry name" value="T CELL RECEPTOR ALPHA VARIABLE 39"/>
    <property type="match status" value="1"/>
</dbReference>
<dbReference type="Pfam" id="PF07686">
    <property type="entry name" value="V-set"/>
    <property type="match status" value="1"/>
</dbReference>
<dbReference type="SUPFAM" id="SSF48726">
    <property type="entry name" value="Immunoglobulin"/>
    <property type="match status" value="1"/>
</dbReference>
<dbReference type="PROSITE" id="PS50835">
    <property type="entry name" value="IG_LIKE"/>
    <property type="match status" value="1"/>
</dbReference>
<name>TVA34_HUMAN</name>
<reference key="1">
    <citation type="journal article" date="2003" name="Nature">
        <title>The DNA sequence and analysis of human chromosome 14.</title>
        <authorList>
            <person name="Heilig R."/>
            <person name="Eckenberg R."/>
            <person name="Petit J.-L."/>
            <person name="Fonknechten N."/>
            <person name="Da Silva C."/>
            <person name="Cattolico L."/>
            <person name="Levy M."/>
            <person name="Barbe V."/>
            <person name="De Berardinis V."/>
            <person name="Ureta-Vidal A."/>
            <person name="Pelletier E."/>
            <person name="Vico V."/>
            <person name="Anthouard V."/>
            <person name="Rowen L."/>
            <person name="Madan A."/>
            <person name="Qin S."/>
            <person name="Sun H."/>
            <person name="Du H."/>
            <person name="Pepin K."/>
            <person name="Artiguenave F."/>
            <person name="Robert C."/>
            <person name="Cruaud C."/>
            <person name="Bruels T."/>
            <person name="Jaillon O."/>
            <person name="Friedlander L."/>
            <person name="Samson G."/>
            <person name="Brottier P."/>
            <person name="Cure S."/>
            <person name="Segurens B."/>
            <person name="Aniere F."/>
            <person name="Samain S."/>
            <person name="Crespeau H."/>
            <person name="Abbasi N."/>
            <person name="Aiach N."/>
            <person name="Boscus D."/>
            <person name="Dickhoff R."/>
            <person name="Dors M."/>
            <person name="Dubois I."/>
            <person name="Friedman C."/>
            <person name="Gouyvenoux M."/>
            <person name="James R."/>
            <person name="Madan A."/>
            <person name="Mairey-Estrada B."/>
            <person name="Mangenot S."/>
            <person name="Martins N."/>
            <person name="Menard M."/>
            <person name="Oztas S."/>
            <person name="Ratcliffe A."/>
            <person name="Shaffer T."/>
            <person name="Trask B."/>
            <person name="Vacherie B."/>
            <person name="Bellemere C."/>
            <person name="Belser C."/>
            <person name="Besnard-Gonnet M."/>
            <person name="Bartol-Mavel D."/>
            <person name="Boutard M."/>
            <person name="Briez-Silla S."/>
            <person name="Combette S."/>
            <person name="Dufosse-Laurent V."/>
            <person name="Ferron C."/>
            <person name="Lechaplais C."/>
            <person name="Louesse C."/>
            <person name="Muselet D."/>
            <person name="Magdelenat G."/>
            <person name="Pateau E."/>
            <person name="Petit E."/>
            <person name="Sirvain-Trukniewicz P."/>
            <person name="Trybou A."/>
            <person name="Vega-Czarny N."/>
            <person name="Bataille E."/>
            <person name="Bluet E."/>
            <person name="Bordelais I."/>
            <person name="Dubois M."/>
            <person name="Dumont C."/>
            <person name="Guerin T."/>
            <person name="Haffray S."/>
            <person name="Hammadi R."/>
            <person name="Muanga J."/>
            <person name="Pellouin V."/>
            <person name="Robert D."/>
            <person name="Wunderle E."/>
            <person name="Gauguet G."/>
            <person name="Roy A."/>
            <person name="Sainte-Marthe L."/>
            <person name="Verdier J."/>
            <person name="Verdier-Discala C."/>
            <person name="Hillier L.W."/>
            <person name="Fulton L."/>
            <person name="McPherson J."/>
            <person name="Matsuda F."/>
            <person name="Wilson R."/>
            <person name="Scarpelli C."/>
            <person name="Gyapay G."/>
            <person name="Wincker P."/>
            <person name="Saurin W."/>
            <person name="Quetier F."/>
            <person name="Waterston R."/>
            <person name="Hood L."/>
            <person name="Weissenbach J."/>
        </authorList>
    </citation>
    <scope>NUCLEOTIDE SEQUENCE [LARGE SCALE GENOMIC DNA] (IMGT ALLELE TRAV34*01)</scope>
</reference>
<reference key="2">
    <citation type="book" date="2001" name="The T Cell Receptor FactsBook.">
        <title>The T Cell Receptor FactsBook.</title>
        <editorList>
            <person name="Lefranc M.P."/>
            <person name="Lefranc G."/>
        </editorList>
        <authorList>
            <person name="Lefranc M.P."/>
            <person name="Lefranc G."/>
        </authorList>
    </citation>
    <scope>NOMENCLATURE</scope>
</reference>
<reference key="3">
    <citation type="journal article" date="2004" name="Nat. Rev. Immunol.">
        <title>The many important facets of T-cell repertoire diversity.</title>
        <authorList>
            <person name="Nikolich-Zugich J."/>
            <person name="Slifka M.K."/>
            <person name="Messaoudi I."/>
        </authorList>
    </citation>
    <scope>REVIEW ON T CELL REPERTOIRE DIVERSITY</scope>
</reference>
<reference key="4">
    <citation type="journal article" date="2010" name="Cold Spring Harb. Perspect. Biol.">
        <title>Structural biology of the T-cell receptor: insights into receptor assembly, ligand recognition, and initiation of signaling.</title>
        <authorList>
            <person name="Wucherpfennig K.W."/>
            <person name="Gagnon E."/>
            <person name="Call M.J."/>
            <person name="Huseby E.S."/>
            <person name="Call M.E."/>
        </authorList>
    </citation>
    <scope>REVIEW ON T CELL RECEPTOR-CD3 COMPLEX ASSEMBLY</scope>
    <scope>SUBCELLULAR LOCATION</scope>
</reference>
<reference key="5">
    <citation type="journal article" date="2013" name="Nat. Rev. Immunol.">
        <title>T cell receptor signalling networks: branched, diversified and bounded.</title>
        <authorList>
            <person name="Brownlie R.J."/>
            <person name="Zamoyska R."/>
        </authorList>
    </citation>
    <scope>REVIEW ON T CELL RECEPTOR SIGNALING</scope>
</reference>
<reference key="6">
    <citation type="journal article" date="2014" name="Front. Immunol.">
        <title>Immunoglobulin and T Cell Receptor Genes: IMGT((R)) and the Birth and Rise of Immunoinformatics.</title>
        <authorList>
            <person name="Lefranc M.P."/>
        </authorList>
    </citation>
    <scope>NOMENCLATURE</scope>
</reference>
<reference key="7">
    <citation type="journal article" date="2015" name="Annu. Rev. Immunol.">
        <title>T cell antigen receptor recognition of antigen-presenting molecules.</title>
        <authorList>
            <person name="Rossjohn J."/>
            <person name="Gras S."/>
            <person name="Miles J.J."/>
            <person name="Turner S.J."/>
            <person name="Godfrey D.I."/>
            <person name="McCluskey J."/>
        </authorList>
    </citation>
    <scope>REVIEW ON FUNCTION</scope>
</reference>
<evidence type="ECO:0000255" key="1"/>
<evidence type="ECO:0000255" key="2">
    <source>
        <dbReference type="PROSITE-ProRule" id="PRU00114"/>
    </source>
</evidence>
<evidence type="ECO:0000303" key="3">
    <source>
    </source>
</evidence>
<evidence type="ECO:0000303" key="4">
    <source>
    </source>
</evidence>
<evidence type="ECO:0000303" key="5">
    <source>
    </source>
</evidence>
<evidence type="ECO:0000303" key="6">
    <source>
    </source>
</evidence>
<evidence type="ECO:0000303" key="7">
    <source>
    </source>
</evidence>
<evidence type="ECO:0000303" key="8">
    <source ref="2"/>
</evidence>
<evidence type="ECO:0000305" key="9"/>